<sequence length="105" mass="11720">MRKIKRDDEVIVIAGKDKGKRGTIKRVLQDGCYVVSGVNMIKRHTKPNPMQGKQGGIVEREAPIHASNVAIFNQETGKADRVGFQIQEDGTKVRIYKSTQKQIDA</sequence>
<comment type="function">
    <text evidence="1">One of two assembly initiator proteins, it binds directly to the 5'-end of the 23S rRNA, where it nucleates assembly of the 50S subunit.</text>
</comment>
<comment type="function">
    <text evidence="1">One of the proteins that surrounds the polypeptide exit tunnel on the outside of the subunit.</text>
</comment>
<comment type="subunit">
    <text evidence="1">Part of the 50S ribosomal subunit.</text>
</comment>
<comment type="similarity">
    <text evidence="1">Belongs to the universal ribosomal protein uL24 family.</text>
</comment>
<keyword id="KW-1185">Reference proteome</keyword>
<keyword id="KW-0687">Ribonucleoprotein</keyword>
<keyword id="KW-0689">Ribosomal protein</keyword>
<keyword id="KW-0694">RNA-binding</keyword>
<keyword id="KW-0699">rRNA-binding</keyword>
<feature type="chain" id="PRO_1000052203" description="Large ribosomal subunit protein uL24">
    <location>
        <begin position="1"/>
        <end position="105"/>
    </location>
</feature>
<protein>
    <recommendedName>
        <fullName evidence="1">Large ribosomal subunit protein uL24</fullName>
    </recommendedName>
    <alternativeName>
        <fullName evidence="2">50S ribosomal protein L24</fullName>
    </alternativeName>
</protein>
<evidence type="ECO:0000255" key="1">
    <source>
        <dbReference type="HAMAP-Rule" id="MF_01326"/>
    </source>
</evidence>
<evidence type="ECO:0000305" key="2"/>
<dbReference type="EMBL" id="CP000285">
    <property type="protein sequence ID" value="ABE57794.1"/>
    <property type="molecule type" value="Genomic_DNA"/>
</dbReference>
<dbReference type="RefSeq" id="WP_011505740.1">
    <property type="nucleotide sequence ID" value="NC_007963.1"/>
</dbReference>
<dbReference type="SMR" id="Q1R0G4"/>
<dbReference type="STRING" id="290398.Csal_0432"/>
<dbReference type="GeneID" id="95333185"/>
<dbReference type="KEGG" id="csa:Csal_0432"/>
<dbReference type="eggNOG" id="COG0198">
    <property type="taxonomic scope" value="Bacteria"/>
</dbReference>
<dbReference type="HOGENOM" id="CLU_093315_2_2_6"/>
<dbReference type="OrthoDB" id="9807419at2"/>
<dbReference type="Proteomes" id="UP000000239">
    <property type="component" value="Chromosome"/>
</dbReference>
<dbReference type="GO" id="GO:1990904">
    <property type="term" value="C:ribonucleoprotein complex"/>
    <property type="evidence" value="ECO:0007669"/>
    <property type="project" value="UniProtKB-KW"/>
</dbReference>
<dbReference type="GO" id="GO:0005840">
    <property type="term" value="C:ribosome"/>
    <property type="evidence" value="ECO:0007669"/>
    <property type="project" value="UniProtKB-KW"/>
</dbReference>
<dbReference type="GO" id="GO:0019843">
    <property type="term" value="F:rRNA binding"/>
    <property type="evidence" value="ECO:0007669"/>
    <property type="project" value="UniProtKB-UniRule"/>
</dbReference>
<dbReference type="GO" id="GO:0003735">
    <property type="term" value="F:structural constituent of ribosome"/>
    <property type="evidence" value="ECO:0007669"/>
    <property type="project" value="InterPro"/>
</dbReference>
<dbReference type="GO" id="GO:0006412">
    <property type="term" value="P:translation"/>
    <property type="evidence" value="ECO:0007669"/>
    <property type="project" value="UniProtKB-UniRule"/>
</dbReference>
<dbReference type="CDD" id="cd06089">
    <property type="entry name" value="KOW_RPL26"/>
    <property type="match status" value="1"/>
</dbReference>
<dbReference type="FunFam" id="2.30.30.30:FF:000004">
    <property type="entry name" value="50S ribosomal protein L24"/>
    <property type="match status" value="1"/>
</dbReference>
<dbReference type="Gene3D" id="2.30.30.30">
    <property type="match status" value="1"/>
</dbReference>
<dbReference type="HAMAP" id="MF_01326_B">
    <property type="entry name" value="Ribosomal_uL24_B"/>
    <property type="match status" value="1"/>
</dbReference>
<dbReference type="InterPro" id="IPR005824">
    <property type="entry name" value="KOW"/>
</dbReference>
<dbReference type="InterPro" id="IPR014722">
    <property type="entry name" value="Rib_uL2_dom2"/>
</dbReference>
<dbReference type="InterPro" id="IPR003256">
    <property type="entry name" value="Ribosomal_uL24"/>
</dbReference>
<dbReference type="InterPro" id="IPR005825">
    <property type="entry name" value="Ribosomal_uL24_CS"/>
</dbReference>
<dbReference type="InterPro" id="IPR041988">
    <property type="entry name" value="Ribosomal_uL24_KOW"/>
</dbReference>
<dbReference type="InterPro" id="IPR008991">
    <property type="entry name" value="Translation_prot_SH3-like_sf"/>
</dbReference>
<dbReference type="NCBIfam" id="TIGR01079">
    <property type="entry name" value="rplX_bact"/>
    <property type="match status" value="1"/>
</dbReference>
<dbReference type="PANTHER" id="PTHR12903">
    <property type="entry name" value="MITOCHONDRIAL RIBOSOMAL PROTEIN L24"/>
    <property type="match status" value="1"/>
</dbReference>
<dbReference type="Pfam" id="PF00467">
    <property type="entry name" value="KOW"/>
    <property type="match status" value="1"/>
</dbReference>
<dbReference type="Pfam" id="PF17136">
    <property type="entry name" value="ribosomal_L24"/>
    <property type="match status" value="1"/>
</dbReference>
<dbReference type="SMART" id="SM00739">
    <property type="entry name" value="KOW"/>
    <property type="match status" value="1"/>
</dbReference>
<dbReference type="SUPFAM" id="SSF50104">
    <property type="entry name" value="Translation proteins SH3-like domain"/>
    <property type="match status" value="1"/>
</dbReference>
<dbReference type="PROSITE" id="PS01108">
    <property type="entry name" value="RIBOSOMAL_L24"/>
    <property type="match status" value="1"/>
</dbReference>
<gene>
    <name evidence="1" type="primary">rplX</name>
    <name type="ordered locus">Csal_0432</name>
</gene>
<proteinExistence type="inferred from homology"/>
<organism>
    <name type="scientific">Chromohalobacter salexigens (strain ATCC BAA-138 / DSM 3043 / CIP 106854 / NCIMB 13768 / 1H11)</name>
    <dbReference type="NCBI Taxonomy" id="290398"/>
    <lineage>
        <taxon>Bacteria</taxon>
        <taxon>Pseudomonadati</taxon>
        <taxon>Pseudomonadota</taxon>
        <taxon>Gammaproteobacteria</taxon>
        <taxon>Oceanospirillales</taxon>
        <taxon>Halomonadaceae</taxon>
        <taxon>Chromohalobacter</taxon>
    </lineage>
</organism>
<name>RL24_CHRSD</name>
<accession>Q1R0G4</accession>
<reference key="1">
    <citation type="journal article" date="2011" name="Stand. Genomic Sci.">
        <title>Complete genome sequence of the halophilic and highly halotolerant Chromohalobacter salexigens type strain (1H11(T)).</title>
        <authorList>
            <person name="Copeland A."/>
            <person name="O'Connor K."/>
            <person name="Lucas S."/>
            <person name="Lapidus A."/>
            <person name="Berry K.W."/>
            <person name="Detter J.C."/>
            <person name="Del Rio T.G."/>
            <person name="Hammon N."/>
            <person name="Dalin E."/>
            <person name="Tice H."/>
            <person name="Pitluck S."/>
            <person name="Bruce D."/>
            <person name="Goodwin L."/>
            <person name="Han C."/>
            <person name="Tapia R."/>
            <person name="Saunders E."/>
            <person name="Schmutz J."/>
            <person name="Brettin T."/>
            <person name="Larimer F."/>
            <person name="Land M."/>
            <person name="Hauser L."/>
            <person name="Vargas C."/>
            <person name="Nieto J.J."/>
            <person name="Kyrpides N.C."/>
            <person name="Ivanova N."/>
            <person name="Goker M."/>
            <person name="Klenk H.P."/>
            <person name="Csonka L.N."/>
            <person name="Woyke T."/>
        </authorList>
    </citation>
    <scope>NUCLEOTIDE SEQUENCE [LARGE SCALE GENOMIC DNA]</scope>
    <source>
        <strain>ATCC BAA-138 / DSM 3043 / CIP 106854 / NCIMB 13768 / 1H11</strain>
    </source>
</reference>